<keyword id="KW-0378">Hydrolase</keyword>
<keyword id="KW-0460">Magnesium</keyword>
<keyword id="KW-0479">Metal-binding</keyword>
<keyword id="KW-0540">Nuclease</keyword>
<keyword id="KW-1277">Toxin-antitoxin system</keyword>
<accession>Q1RHR2</accession>
<reference key="1">
    <citation type="journal article" date="2006" name="PLoS Genet.">
        <title>Genome sequence of Rickettsia bellii illuminates the role of amoebae in gene exchanges between intracellular pathogens.</title>
        <authorList>
            <person name="Ogata H."/>
            <person name="La Scola B."/>
            <person name="Audic S."/>
            <person name="Renesto P."/>
            <person name="Blanc G."/>
            <person name="Robert C."/>
            <person name="Fournier P.-E."/>
            <person name="Claverie J.-M."/>
            <person name="Raoult D."/>
        </authorList>
    </citation>
    <scope>NUCLEOTIDE SEQUENCE [LARGE SCALE GENOMIC DNA]</scope>
    <source>
        <strain>RML369-C</strain>
    </source>
</reference>
<reference key="2">
    <citation type="journal article" date="2011" name="PLoS ONE">
        <title>Effect of rickettsial toxin VapC on its eukaryotic host.</title>
        <authorList>
            <person name="Audoly G."/>
            <person name="Vincentelli R."/>
            <person name="Edouard S."/>
            <person name="Georgiades K."/>
            <person name="Mediannikov O."/>
            <person name="Gimenez G."/>
            <person name="Socolovschi C."/>
            <person name="Mege J.L."/>
            <person name="Cambillau C."/>
            <person name="Raoult D."/>
        </authorList>
    </citation>
    <scope>FUNCTION</scope>
    <scope>EXPRESSION IN MOUSE</scope>
    <source>
        <strain>RML369-C</strain>
    </source>
</reference>
<sequence>MGLIVDTSIIIALERGKISTKAWSNYDQAYINPIVLTELLIGIDRVKDENKRGQCLTFIEYVKSLFTLLPFGIEEAYVYAKIIDNLYKERITIGVHDLLIAATAITYNYPILTLNTKDFKRIPELEVLTVPLKD</sequence>
<gene>
    <name evidence="4" type="primary">vapC</name>
    <name evidence="3" type="synonym">vapC1</name>
    <name type="ordered locus">RBE_1021</name>
</gene>
<proteinExistence type="inferred from homology"/>
<name>VAPC_RICBR</name>
<protein>
    <recommendedName>
        <fullName evidence="3">Ribonuclease VapC</fullName>
        <shortName evidence="4">RNase VapC</shortName>
        <ecNumber evidence="4">3.1.-.-</ecNumber>
    </recommendedName>
    <alternativeName>
        <fullName evidence="3">Toxin VapC</fullName>
    </alternativeName>
</protein>
<feature type="chain" id="PRO_0000432235" description="Ribonuclease VapC">
    <location>
        <begin position="1"/>
        <end position="134"/>
    </location>
</feature>
<feature type="domain" description="PINc">
    <location>
        <begin position="4"/>
        <end position="124"/>
    </location>
</feature>
<feature type="binding site" evidence="1">
    <location>
        <position position="6"/>
    </location>
    <ligand>
        <name>Mg(2+)</name>
        <dbReference type="ChEBI" id="CHEBI:18420"/>
    </ligand>
</feature>
<organism>
    <name type="scientific">Rickettsia bellii (strain RML369-C)</name>
    <dbReference type="NCBI Taxonomy" id="336407"/>
    <lineage>
        <taxon>Bacteria</taxon>
        <taxon>Pseudomonadati</taxon>
        <taxon>Pseudomonadota</taxon>
        <taxon>Alphaproteobacteria</taxon>
        <taxon>Rickettsiales</taxon>
        <taxon>Rickettsiaceae</taxon>
        <taxon>Rickettsieae</taxon>
        <taxon>Rickettsia</taxon>
        <taxon>belli group</taxon>
    </lineage>
</organism>
<evidence type="ECO:0000250" key="1">
    <source>
        <dbReference type="UniProtKB" id="O66399"/>
    </source>
</evidence>
<evidence type="ECO:0000269" key="2">
    <source>
    </source>
</evidence>
<evidence type="ECO:0000303" key="3">
    <source>
    </source>
</evidence>
<evidence type="ECO:0000305" key="4"/>
<dbReference type="EC" id="3.1.-.-" evidence="4"/>
<dbReference type="EMBL" id="CP000087">
    <property type="protein sequence ID" value="ABE05102.1"/>
    <property type="molecule type" value="Genomic_DNA"/>
</dbReference>
<dbReference type="RefSeq" id="WP_011477680.1">
    <property type="nucleotide sequence ID" value="NC_007940.1"/>
</dbReference>
<dbReference type="SMR" id="Q1RHR2"/>
<dbReference type="KEGG" id="rbe:RBE_1021"/>
<dbReference type="eggNOG" id="COG1487">
    <property type="taxonomic scope" value="Bacteria"/>
</dbReference>
<dbReference type="HOGENOM" id="CLU_118482_7_0_5"/>
<dbReference type="OrthoDB" id="7161000at2"/>
<dbReference type="Proteomes" id="UP000001951">
    <property type="component" value="Chromosome"/>
</dbReference>
<dbReference type="GO" id="GO:0046872">
    <property type="term" value="F:metal ion binding"/>
    <property type="evidence" value="ECO:0007669"/>
    <property type="project" value="UniProtKB-KW"/>
</dbReference>
<dbReference type="GO" id="GO:0004518">
    <property type="term" value="F:nuclease activity"/>
    <property type="evidence" value="ECO:0007669"/>
    <property type="project" value="UniProtKB-KW"/>
</dbReference>
<dbReference type="Gene3D" id="3.40.50.1010">
    <property type="entry name" value="5'-nuclease"/>
    <property type="match status" value="1"/>
</dbReference>
<dbReference type="InterPro" id="IPR029060">
    <property type="entry name" value="PIN-like_dom_sf"/>
</dbReference>
<dbReference type="InterPro" id="IPR002716">
    <property type="entry name" value="PIN_dom"/>
</dbReference>
<dbReference type="InterPro" id="IPR050556">
    <property type="entry name" value="Type_II_TA_system_RNase"/>
</dbReference>
<dbReference type="PANTHER" id="PTHR33653">
    <property type="entry name" value="RIBONUCLEASE VAPC2"/>
    <property type="match status" value="1"/>
</dbReference>
<dbReference type="PANTHER" id="PTHR33653:SF1">
    <property type="entry name" value="RIBONUCLEASE VAPC2"/>
    <property type="match status" value="1"/>
</dbReference>
<dbReference type="Pfam" id="PF01850">
    <property type="entry name" value="PIN"/>
    <property type="match status" value="1"/>
</dbReference>
<dbReference type="SUPFAM" id="SSF88723">
    <property type="entry name" value="PIN domain-like"/>
    <property type="match status" value="1"/>
</dbReference>
<comment type="function">
    <text evidence="2">Toxic component of a type II toxin-antitoxin (TA) system. Has ssRNase activity. Its RNase activity is partially neutralized by cognate antitoxin VapB. Rapidly induces apoptosis upon microinjection into mouse fibroblasts (L929 line). Probably contributes to host cell death if bacterial cell lysis occurs during host infection.</text>
</comment>
<comment type="cofactor">
    <cofactor evidence="1">
        <name>Mg(2+)</name>
        <dbReference type="ChEBI" id="CHEBI:18420"/>
    </cofactor>
</comment>
<comment type="similarity">
    <text evidence="4">Belongs to the PINc/VapC protein family.</text>
</comment>